<feature type="chain" id="PRO_0000181372" description="Y-linked testis-specific protein 1">
    <location>
        <begin position="1"/>
        <end position="232"/>
    </location>
</feature>
<accession>P13675</accession>
<gene>
    <name type="primary">Ssty1</name>
    <name type="synonym">Smy</name>
</gene>
<protein>
    <recommendedName>
        <fullName>Y-linked testis-specific protein 1</fullName>
    </recommendedName>
</protein>
<organism>
    <name type="scientific">Mus musculus</name>
    <name type="common">Mouse</name>
    <dbReference type="NCBI Taxonomy" id="10090"/>
    <lineage>
        <taxon>Eukaryota</taxon>
        <taxon>Metazoa</taxon>
        <taxon>Chordata</taxon>
        <taxon>Craniata</taxon>
        <taxon>Vertebrata</taxon>
        <taxon>Euteleostomi</taxon>
        <taxon>Mammalia</taxon>
        <taxon>Eutheria</taxon>
        <taxon>Euarchontoglires</taxon>
        <taxon>Glires</taxon>
        <taxon>Rodentia</taxon>
        <taxon>Myomorpha</taxon>
        <taxon>Muroidea</taxon>
        <taxon>Muridae</taxon>
        <taxon>Murinae</taxon>
        <taxon>Mus</taxon>
        <taxon>Mus</taxon>
    </lineage>
</organism>
<evidence type="ECO:0000269" key="1">
    <source>
    </source>
</evidence>
<evidence type="ECO:0000305" key="2"/>
<name>SSTY1_MOUSE</name>
<dbReference type="EMBL" id="X05260">
    <property type="protein sequence ID" value="CAA28881.1"/>
    <property type="molecule type" value="mRNA"/>
</dbReference>
<dbReference type="CCDS" id="CCDS85867.1"/>
<dbReference type="PIR" id="A27503">
    <property type="entry name" value="A27503"/>
</dbReference>
<dbReference type="RefSeq" id="NP_033246.2">
    <property type="nucleotide sequence ID" value="NM_009220.2"/>
</dbReference>
<dbReference type="SMR" id="P13675"/>
<dbReference type="FunCoup" id="P13675">
    <property type="interactions" value="392"/>
</dbReference>
<dbReference type="STRING" id="10090.ENSMUSP00000139883"/>
<dbReference type="iPTMnet" id="P13675"/>
<dbReference type="PhosphoSitePlus" id="P13675"/>
<dbReference type="PaxDb" id="10090-ENSMUSP00000136379"/>
<dbReference type="GeneID" id="20611"/>
<dbReference type="KEGG" id="mmu:20611"/>
<dbReference type="AGR" id="MGI:1314663"/>
<dbReference type="CTD" id="20611"/>
<dbReference type="MGI" id="MGI:1314663">
    <property type="gene designation" value="Ssty1"/>
</dbReference>
<dbReference type="eggNOG" id="ENOG502QRYD">
    <property type="taxonomic scope" value="Eukaryota"/>
</dbReference>
<dbReference type="InParanoid" id="P13675"/>
<dbReference type="OrthoDB" id="57364at9989"/>
<dbReference type="PhylomeDB" id="P13675"/>
<dbReference type="BioGRID-ORCS" id="20611">
    <property type="hits" value="6 hits in 32 CRISPR screens"/>
</dbReference>
<dbReference type="ChiTaRS" id="Ssty1">
    <property type="organism name" value="mouse"/>
</dbReference>
<dbReference type="PRO" id="PR:P13675"/>
<dbReference type="Proteomes" id="UP000000589">
    <property type="component" value="Unplaced"/>
</dbReference>
<dbReference type="RNAct" id="P13675">
    <property type="molecule type" value="protein"/>
</dbReference>
<dbReference type="GO" id="GO:0007276">
    <property type="term" value="P:gamete generation"/>
    <property type="evidence" value="ECO:0007669"/>
    <property type="project" value="InterPro"/>
</dbReference>
<dbReference type="FunFam" id="2.80.10.70:FF:000001">
    <property type="entry name" value="Spindlin 1"/>
    <property type="match status" value="1"/>
</dbReference>
<dbReference type="Gene3D" id="2.80.10.70">
    <property type="entry name" value="Spindlin/Ssty"/>
    <property type="match status" value="1"/>
</dbReference>
<dbReference type="InterPro" id="IPR003671">
    <property type="entry name" value="SPIN/Ssty"/>
</dbReference>
<dbReference type="InterPro" id="IPR042567">
    <property type="entry name" value="SPIN/Ssty_sf"/>
</dbReference>
<dbReference type="PANTHER" id="PTHR10405">
    <property type="entry name" value="SPINDLIN"/>
    <property type="match status" value="1"/>
</dbReference>
<dbReference type="Pfam" id="PF02513">
    <property type="entry name" value="Spin-Ssty"/>
    <property type="match status" value="3"/>
</dbReference>
<reference key="1">
    <citation type="journal article" date="1987" name="Nucleic Acids Res.">
        <title>Molecular cloning and sequence analysis of a mouse Y chromosome RNA transcript expressed in the testis.</title>
        <authorList>
            <person name="Bishop C.E."/>
            <person name="Hatat D."/>
        </authorList>
    </citation>
    <scope>NUCLEOTIDE SEQUENCE [MRNA]</scope>
    <source>
        <tissue>Testis</tissue>
    </source>
</reference>
<reference key="2">
    <citation type="journal article" date="2004" name="Genomics">
        <title>A protein encoded by a member of the multicopy Ssty gene family located on the long arm of the mouse Y chromosome is expressed during sperm development.</title>
        <authorList>
            <person name="Toure A."/>
            <person name="Grigoriev V."/>
            <person name="Mahadevaiah S.K."/>
            <person name="Rattigan A."/>
            <person name="Ojarikre O.A."/>
            <person name="Burgoyne P.S."/>
        </authorList>
    </citation>
    <scope>TISSUE SPECIFICITY</scope>
    <scope>DEVELOPMENTAL STAGE</scope>
</reference>
<comment type="tissue specificity">
    <text evidence="1">Expressed in testis (at protein level).</text>
</comment>
<comment type="developmental stage">
    <text evidence="1">Not detectable at 20 days postpartum (dpp), barely detectable at 22 days postpartum and is strongly detected thereafter (at protein level). Expression is restricted to spermatid stages.</text>
</comment>
<comment type="similarity">
    <text evidence="2">Belongs to the SPIN/STSY family.</text>
</comment>
<keyword id="KW-1185">Reference proteome</keyword>
<proteinExistence type="evidence at protein level"/>
<sequence>MSSLMKKRRRKSSSNTLRNIVSCRISHSWKEGNEPVTQWKAIVLDQLPTNPSLYFVKYDGIDSIYVLELYSDDRILNLKVLPPIVVFPQVRDAHLARALVGRAVQHKFERKDGSEVNWRGVVLAQVPIMKDLFYITYKKDPALYAYQLLDDYKEGNLHMIPDTPPAEERSGDDSDVLIGNWVEYTRKDGSKKFGKVVYQVLANPSVYFIKFHGDIHIYVYTMVPKILEVEKS</sequence>